<gene>
    <name type="primary">ctaG</name>
    <name type="synonym">cox11</name>
</gene>
<evidence type="ECO:0000255" key="1"/>
<evidence type="ECO:0000305" key="2"/>
<name>COXZ_CERSP</name>
<keyword id="KW-0997">Cell inner membrane</keyword>
<keyword id="KW-1003">Cell membrane</keyword>
<keyword id="KW-0186">Copper</keyword>
<keyword id="KW-0472">Membrane</keyword>
<keyword id="KW-0735">Signal-anchor</keyword>
<keyword id="KW-0812">Transmembrane</keyword>
<keyword id="KW-1133">Transmembrane helix</keyword>
<organism>
    <name type="scientific">Cereibacter sphaeroides</name>
    <name type="common">Rhodobacter sphaeroides</name>
    <dbReference type="NCBI Taxonomy" id="1063"/>
    <lineage>
        <taxon>Bacteria</taxon>
        <taxon>Pseudomonadati</taxon>
        <taxon>Pseudomonadota</taxon>
        <taxon>Alphaproteobacteria</taxon>
        <taxon>Rhodobacterales</taxon>
        <taxon>Paracoccaceae</taxon>
        <taxon>Cereibacter</taxon>
    </lineage>
</organism>
<reference key="1">
    <citation type="journal article" date="1992" name="J. Biol. Chem.">
        <title>Cytochrome aa3 of Rhodobacter sphaeroides as a model for mitochondrial cytochrome c oxidase. The coxII/coxIII operon codes for structural and assembly proteins homologous to those in yeast.</title>
        <authorList>
            <person name="Cao J."/>
            <person name="Hosler J.P."/>
            <person name="Shapleigh J."/>
            <person name="Revzin A."/>
            <person name="Ferguson-Miller S."/>
        </authorList>
    </citation>
    <scope>NUCLEOTIDE SEQUENCE [GENOMIC DNA]</scope>
</reference>
<reference key="2">
    <citation type="journal article" date="2000" name="J. Biol. Chem.">
        <title>Cox11p is required for stable formation of the Cu(B) and magnesium centers of cytochrome c oxidase.</title>
        <authorList>
            <person name="Hiser L."/>
            <person name="Di Valentin M."/>
            <person name="Hamer A.G."/>
            <person name="Hosler J.P."/>
        </authorList>
    </citation>
    <scope>CHARACTERIZATION</scope>
</reference>
<protein>
    <recommendedName>
        <fullName>Cytochrome c oxidase assembly protein CtaG</fullName>
    </recommendedName>
</protein>
<sequence>MSLSPHQKTAGGLVLVVAVMGAASFAAVPFYNWFCRVTGFAGTTAVATEAPAEVLDRTVKVRFDASREAGMPWEFRPLQREMKLKIGETGLAFYEAYNPTDRTVAGTASYNVTPDAAGGYFAKIACFCFTEQVLAPGERVEMPVTFYVDPAIIDDPDGRYVRQITLSYTFHETALTEEQAALAAESATDVN</sequence>
<feature type="chain" id="PRO_0000206037" description="Cytochrome c oxidase assembly protein CtaG">
    <location>
        <begin position="1"/>
        <end position="191"/>
    </location>
</feature>
<feature type="topological domain" description="Cytoplasmic" evidence="1">
    <location>
        <begin position="1"/>
        <end position="9"/>
    </location>
</feature>
<feature type="transmembrane region" description="Helical; Signal-anchor for type II membrane protein" evidence="1">
    <location>
        <begin position="10"/>
        <end position="30"/>
    </location>
</feature>
<feature type="topological domain" description="Periplasmic" evidence="1">
    <location>
        <begin position="31"/>
        <end position="191"/>
    </location>
</feature>
<comment type="function">
    <text>Exerts its effect at some terminal stage of cytochrome c oxidase synthesis, probably by being involved in the insertion of the copper B into subunit I.</text>
</comment>
<comment type="subcellular location">
    <subcellularLocation>
        <location evidence="2">Cell inner membrane</location>
        <topology evidence="2">Single-pass type II membrane protein</topology>
        <orientation evidence="2">Periplasmic side</orientation>
    </subcellularLocation>
</comment>
<comment type="similarity">
    <text evidence="2">Belongs to the COX11/CtaG family.</text>
</comment>
<dbReference type="PIR" id="B45164">
    <property type="entry name" value="B45164"/>
</dbReference>
<dbReference type="RefSeq" id="WP_011337013.1">
    <property type="nucleotide sequence ID" value="NZ_WSNV01000001.1"/>
</dbReference>
<dbReference type="SMR" id="P56940"/>
<dbReference type="OMA" id="NKLECFC"/>
<dbReference type="GO" id="GO:0005886">
    <property type="term" value="C:plasma membrane"/>
    <property type="evidence" value="ECO:0007669"/>
    <property type="project" value="UniProtKB-SubCell"/>
</dbReference>
<dbReference type="GO" id="GO:0005507">
    <property type="term" value="F:copper ion binding"/>
    <property type="evidence" value="ECO:0007669"/>
    <property type="project" value="InterPro"/>
</dbReference>
<dbReference type="GO" id="GO:0008535">
    <property type="term" value="P:respiratory chain complex IV assembly"/>
    <property type="evidence" value="ECO:0007669"/>
    <property type="project" value="UniProtKB-UniRule"/>
</dbReference>
<dbReference type="FunFam" id="2.60.370.10:FF:000001">
    <property type="entry name" value="COX11 cytochrome c oxidase assembly homolog"/>
    <property type="match status" value="1"/>
</dbReference>
<dbReference type="Gene3D" id="2.60.370.10">
    <property type="entry name" value="Ctag/Cox11"/>
    <property type="match status" value="1"/>
</dbReference>
<dbReference type="HAMAP" id="MF_00155">
    <property type="entry name" value="CtaG"/>
    <property type="match status" value="1"/>
</dbReference>
<dbReference type="InterPro" id="IPR023471">
    <property type="entry name" value="CtaG/Cox11_dom_sf"/>
</dbReference>
<dbReference type="InterPro" id="IPR007533">
    <property type="entry name" value="Cyt_c_oxidase_assmbl_CtaG"/>
</dbReference>
<dbReference type="NCBIfam" id="NF003465">
    <property type="entry name" value="PRK05089.1"/>
    <property type="match status" value="1"/>
</dbReference>
<dbReference type="PANTHER" id="PTHR21320:SF3">
    <property type="entry name" value="CYTOCHROME C OXIDASE ASSEMBLY PROTEIN COX11, MITOCHONDRIAL-RELATED"/>
    <property type="match status" value="1"/>
</dbReference>
<dbReference type="PANTHER" id="PTHR21320">
    <property type="entry name" value="CYTOCHROME C OXIDASE ASSEMBLY PROTEIN COX11-RELATED"/>
    <property type="match status" value="1"/>
</dbReference>
<dbReference type="Pfam" id="PF04442">
    <property type="entry name" value="CtaG_Cox11"/>
    <property type="match status" value="1"/>
</dbReference>
<dbReference type="PIRSF" id="PIRSF005413">
    <property type="entry name" value="COX11"/>
    <property type="match status" value="1"/>
</dbReference>
<dbReference type="SUPFAM" id="SSF110111">
    <property type="entry name" value="Ctag/Cox11"/>
    <property type="match status" value="1"/>
</dbReference>
<proteinExistence type="evidence at protein level"/>
<accession>P56940</accession>